<dbReference type="EC" id="2.7.11.1" evidence="3"/>
<dbReference type="EMBL" id="AY191612">
    <property type="protein sequence ID" value="AAP23262.1"/>
    <property type="molecule type" value="Genomic_DNA"/>
</dbReference>
<dbReference type="SMR" id="P61584"/>
<dbReference type="STRING" id="9598.ENSPTRP00000084841"/>
<dbReference type="PaxDb" id="9598-ENSPTRP00000016847"/>
<dbReference type="eggNOG" id="KOG0612">
    <property type="taxonomic scope" value="Eukaryota"/>
</dbReference>
<dbReference type="InParanoid" id="P61584"/>
<dbReference type="Proteomes" id="UP000002277">
    <property type="component" value="Unplaced"/>
</dbReference>
<dbReference type="GO" id="GO:0032059">
    <property type="term" value="C:bleb"/>
    <property type="evidence" value="ECO:0007669"/>
    <property type="project" value="UniProtKB-SubCell"/>
</dbReference>
<dbReference type="GO" id="GO:0005814">
    <property type="term" value="C:centriole"/>
    <property type="evidence" value="ECO:0007669"/>
    <property type="project" value="UniProtKB-SubCell"/>
</dbReference>
<dbReference type="GO" id="GO:0005737">
    <property type="term" value="C:cytoplasm"/>
    <property type="evidence" value="ECO:0000318"/>
    <property type="project" value="GO_Central"/>
</dbReference>
<dbReference type="GO" id="GO:0010494">
    <property type="term" value="C:cytoplasmic stress granule"/>
    <property type="evidence" value="ECO:0000318"/>
    <property type="project" value="GO_Central"/>
</dbReference>
<dbReference type="GO" id="GO:0005856">
    <property type="term" value="C:cytoskeleton"/>
    <property type="evidence" value="ECO:0000250"/>
    <property type="project" value="UniProtKB"/>
</dbReference>
<dbReference type="GO" id="GO:0000139">
    <property type="term" value="C:Golgi membrane"/>
    <property type="evidence" value="ECO:0007669"/>
    <property type="project" value="UniProtKB-SubCell"/>
</dbReference>
<dbReference type="GO" id="GO:0030027">
    <property type="term" value="C:lamellipodium"/>
    <property type="evidence" value="ECO:0000250"/>
    <property type="project" value="UniProtKB"/>
</dbReference>
<dbReference type="GO" id="GO:0005886">
    <property type="term" value="C:plasma membrane"/>
    <property type="evidence" value="ECO:0000250"/>
    <property type="project" value="UniProtKB"/>
</dbReference>
<dbReference type="GO" id="GO:0001726">
    <property type="term" value="C:ruffle"/>
    <property type="evidence" value="ECO:0000250"/>
    <property type="project" value="UniProtKB"/>
</dbReference>
<dbReference type="GO" id="GO:0005524">
    <property type="term" value="F:ATP binding"/>
    <property type="evidence" value="ECO:0007669"/>
    <property type="project" value="UniProtKB-KW"/>
</dbReference>
<dbReference type="GO" id="GO:0106310">
    <property type="term" value="F:protein serine kinase activity"/>
    <property type="evidence" value="ECO:0007669"/>
    <property type="project" value="RHEA"/>
</dbReference>
<dbReference type="GO" id="GO:0004674">
    <property type="term" value="F:protein serine/threonine kinase activity"/>
    <property type="evidence" value="ECO:0000250"/>
    <property type="project" value="UniProtKB"/>
</dbReference>
<dbReference type="GO" id="GO:0072518">
    <property type="term" value="F:Rho-dependent protein serine/threonine kinase activity"/>
    <property type="evidence" value="ECO:0000318"/>
    <property type="project" value="GO_Central"/>
</dbReference>
<dbReference type="GO" id="GO:0031267">
    <property type="term" value="F:small GTPase binding"/>
    <property type="evidence" value="ECO:0007669"/>
    <property type="project" value="InterPro"/>
</dbReference>
<dbReference type="GO" id="GO:0008270">
    <property type="term" value="F:zinc ion binding"/>
    <property type="evidence" value="ECO:0007669"/>
    <property type="project" value="UniProtKB-KW"/>
</dbReference>
<dbReference type="GO" id="GO:0031032">
    <property type="term" value="P:actomyosin structure organization"/>
    <property type="evidence" value="ECO:0000318"/>
    <property type="project" value="GO_Central"/>
</dbReference>
<dbReference type="GO" id="GO:0006915">
    <property type="term" value="P:apoptotic process"/>
    <property type="evidence" value="ECO:0007669"/>
    <property type="project" value="UniProtKB-KW"/>
</dbReference>
<dbReference type="GO" id="GO:0030866">
    <property type="term" value="P:cortical actin cytoskeleton organization"/>
    <property type="evidence" value="ECO:0000318"/>
    <property type="project" value="GO_Central"/>
</dbReference>
<dbReference type="GO" id="GO:0048598">
    <property type="term" value="P:embryonic morphogenesis"/>
    <property type="evidence" value="ECO:0000318"/>
    <property type="project" value="GO_Central"/>
</dbReference>
<dbReference type="GO" id="GO:0000281">
    <property type="term" value="P:mitotic cytokinesis"/>
    <property type="evidence" value="ECO:0000318"/>
    <property type="project" value="GO_Central"/>
</dbReference>
<dbReference type="GO" id="GO:0051451">
    <property type="term" value="P:myoblast migration"/>
    <property type="evidence" value="ECO:0000250"/>
    <property type="project" value="UniProtKB"/>
</dbReference>
<dbReference type="GO" id="GO:0051894">
    <property type="term" value="P:positive regulation of focal adhesion assembly"/>
    <property type="evidence" value="ECO:0000250"/>
    <property type="project" value="UniProtKB"/>
</dbReference>
<dbReference type="GO" id="GO:0032956">
    <property type="term" value="P:regulation of actin cytoskeleton organization"/>
    <property type="evidence" value="ECO:0000318"/>
    <property type="project" value="GO_Central"/>
</dbReference>
<dbReference type="GO" id="GO:1901888">
    <property type="term" value="P:regulation of cell junction assembly"/>
    <property type="evidence" value="ECO:0000318"/>
    <property type="project" value="GO_Central"/>
</dbReference>
<dbReference type="GO" id="GO:0030334">
    <property type="term" value="P:regulation of cell migration"/>
    <property type="evidence" value="ECO:0000250"/>
    <property type="project" value="UniProtKB"/>
</dbReference>
<dbReference type="GO" id="GO:0070507">
    <property type="term" value="P:regulation of microtubule cytoskeleton organization"/>
    <property type="evidence" value="ECO:0000250"/>
    <property type="project" value="UniProtKB"/>
</dbReference>
<dbReference type="GO" id="GO:0007266">
    <property type="term" value="P:Rho protein signal transduction"/>
    <property type="evidence" value="ECO:0000318"/>
    <property type="project" value="GO_Central"/>
</dbReference>
<dbReference type="CDD" id="cd20874">
    <property type="entry name" value="C1_ROCK1"/>
    <property type="match status" value="1"/>
</dbReference>
<dbReference type="CDD" id="cd01242">
    <property type="entry name" value="PH_ROCK"/>
    <property type="match status" value="1"/>
</dbReference>
<dbReference type="CDD" id="cd22250">
    <property type="entry name" value="ROCK_SBD"/>
    <property type="match status" value="1"/>
</dbReference>
<dbReference type="FunFam" id="1.20.5.340:FF:000023">
    <property type="entry name" value="Rho-associated protein kinase 1"/>
    <property type="match status" value="1"/>
</dbReference>
<dbReference type="FunFam" id="3.30.60.20:FF:000036">
    <property type="entry name" value="Rho-associated protein kinase 1"/>
    <property type="match status" value="1"/>
</dbReference>
<dbReference type="FunFam" id="2.30.29.30:FF:000033">
    <property type="entry name" value="Rho-associated protein kinase 2"/>
    <property type="match status" value="1"/>
</dbReference>
<dbReference type="FunFam" id="1.20.5.730:FF:000001">
    <property type="entry name" value="rho-associated protein kinase 2"/>
    <property type="match status" value="1"/>
</dbReference>
<dbReference type="Gene3D" id="1.20.5.340">
    <property type="match status" value="1"/>
</dbReference>
<dbReference type="Gene3D" id="3.30.60.20">
    <property type="match status" value="1"/>
</dbReference>
<dbReference type="Gene3D" id="3.30.200.20">
    <property type="entry name" value="Phosphorylase Kinase, domain 1"/>
    <property type="match status" value="1"/>
</dbReference>
<dbReference type="Gene3D" id="2.30.29.30">
    <property type="entry name" value="Pleckstrin-homology domain (PH domain)/Phosphotyrosine-binding domain (PTB)"/>
    <property type="match status" value="1"/>
</dbReference>
<dbReference type="Gene3D" id="1.20.5.730">
    <property type="entry name" value="Single helix bin"/>
    <property type="match status" value="1"/>
</dbReference>
<dbReference type="InterPro" id="IPR000961">
    <property type="entry name" value="AGC-kinase_C"/>
</dbReference>
<dbReference type="InterPro" id="IPR046349">
    <property type="entry name" value="C1-like_sf"/>
</dbReference>
<dbReference type="InterPro" id="IPR011072">
    <property type="entry name" value="HR1_rho-bd"/>
</dbReference>
<dbReference type="InterPro" id="IPR002219">
    <property type="entry name" value="PE/DAG-bd"/>
</dbReference>
<dbReference type="InterPro" id="IPR011993">
    <property type="entry name" value="PH-like_dom_sf"/>
</dbReference>
<dbReference type="InterPro" id="IPR001849">
    <property type="entry name" value="PH_domain"/>
</dbReference>
<dbReference type="InterPro" id="IPR050839">
    <property type="entry name" value="Rho-assoc_Ser/Thr_Kinase"/>
</dbReference>
<dbReference type="InterPro" id="IPR015008">
    <property type="entry name" value="ROCK_Rho-bd_dom"/>
</dbReference>
<dbReference type="PANTHER" id="PTHR22988">
    <property type="entry name" value="MYOTONIC DYSTROPHY S/T KINASE-RELATED"/>
    <property type="match status" value="1"/>
</dbReference>
<dbReference type="PANTHER" id="PTHR22988:SF33">
    <property type="entry name" value="RHO-ASSOCIATED PROTEIN KINASE 1"/>
    <property type="match status" value="1"/>
</dbReference>
<dbReference type="Pfam" id="PF25346">
    <property type="entry name" value="PH_MRCK"/>
    <property type="match status" value="1"/>
</dbReference>
<dbReference type="Pfam" id="PF08912">
    <property type="entry name" value="Rho_Binding"/>
    <property type="match status" value="1"/>
</dbReference>
<dbReference type="SMART" id="SM00109">
    <property type="entry name" value="C1"/>
    <property type="match status" value="1"/>
</dbReference>
<dbReference type="SMART" id="SM00233">
    <property type="entry name" value="PH"/>
    <property type="match status" value="1"/>
</dbReference>
<dbReference type="SUPFAM" id="SSF57889">
    <property type="entry name" value="Cysteine-rich domain"/>
    <property type="match status" value="1"/>
</dbReference>
<dbReference type="SUPFAM" id="SSF103652">
    <property type="entry name" value="G protein-binding domain"/>
    <property type="match status" value="1"/>
</dbReference>
<dbReference type="SUPFAM" id="SSF90257">
    <property type="entry name" value="Myosin rod fragments"/>
    <property type="match status" value="1"/>
</dbReference>
<dbReference type="SUPFAM" id="SSF50729">
    <property type="entry name" value="PH domain-like"/>
    <property type="match status" value="1"/>
</dbReference>
<dbReference type="PROSITE" id="PS51285">
    <property type="entry name" value="AGC_KINASE_CTER"/>
    <property type="match status" value="1"/>
</dbReference>
<dbReference type="PROSITE" id="PS50003">
    <property type="entry name" value="PH_DOMAIN"/>
    <property type="match status" value="1"/>
</dbReference>
<dbReference type="PROSITE" id="PS51860">
    <property type="entry name" value="REM_1"/>
    <property type="match status" value="1"/>
</dbReference>
<dbReference type="PROSITE" id="PS51859">
    <property type="entry name" value="RHO_BD"/>
    <property type="match status" value="1"/>
</dbReference>
<dbReference type="PROSITE" id="PS50081">
    <property type="entry name" value="ZF_DAG_PE_2"/>
    <property type="match status" value="1"/>
</dbReference>
<sequence length="1003" mass="117524">VAPVVPDLSSDIDTSNFDDLEEDKGEEETFPIPKAFVGNQLPFVGFTYYSNRRYLSSANPNDNRTSSNADKSLQESLQKTIYKLEEQLHNEMQLKDEMEQKCRTSNIKLDKIMKELDEEGNQRRNLESTVSQIEKEKMLLQHRINEYQRKAEQENEKRRNVENEVSTLKDQLEDLKKVSQNSQLANEKLSQLQKQLEEANDLLRTESDTAVRLRKSHTEMSKSISQLESLNRELQERNRILENSKSQTDKDYYQLQAILEAERRDRGHDSEMIGDLQARITSLQEEVKHLKHNLEKVEGERKEAQDMLNHSEKEKNNLEIDLNYKLKSLQQRLEQEVNEHKVTKARLTDKHQSIEEAKSVAMCEMEKKLKEEREAREKAENRVVQIEKQCSMLDVDLKQSQQKLEHLTGNKERMEDEVKNLTLQLEQESNKRLLLQNELKTQAFEADNLKGLEKQMKQEINTLLEAKRLLEFELAQLTKQYRGNEGQMRELQDQLEAEQYFSTLYKTQVKELKEEIEEKNRENLKKIQELQNEKETLATQLDLAETKAESEQLARGLLEEQYFELTQESKKAASRNRQEITDKDHTVSRLEEANSMLTKDIEILRRENEELTEKMKKAEEEYKLEKEEEISNLKAAFEKNINTERTLKTQAVNKLAEIMNRKDFKIDRKKANTQDLRKKEKENRKLQLELNQEREKFNQMVVKHQKELNDMQAQLVEECAHRNELQMQLASKESDIEQLRAKLLDLSDSTSVASFPSADETDGNLPESRIEGWLSVPNRGNIKRYGWKKQYVVVSSKKILFYNDEQDKEQSNPSMVLDIDKLFHVRPVTQGDVYRAETEEIPKIFQILYANEGECRKDVEMEPVQQAEKTNFQNHKGHEFIPTLYHFPANCDACAKPLWHVFKPPPALECRRCHVKCHRDHLDKKEDLICPCKVSYDVTSARDMLLLACSQDEQKKWVTHLVKKIPKNPPSGFVRASPRTLSTRSTANQSFRKVVKNTSGKTR</sequence>
<comment type="function">
    <text evidence="2 3 4">Protein kinase which is a key regulator of actin cytoskeleton and cell polarity. Involved in regulation of smooth muscle contraction, actin cytoskeleton organization, stress fiber and focal adhesion formation, neurite retraction, cell adhesion and motility via phosphorylation of DAPK3, GFAP, LIMK1, LIMK2, MYL9/MLC2, TPPP, PFN1 and PPP1R12A. Phosphorylates FHOD1 and acts synergistically with it to promote SRC-dependent non-apoptotic plasma membrane blebbing. Phosphorylates JIP3 and regulates the recruitment of JNK to JIP3 upon UVB-induced stress (By similarity). Acts as a suppressor of inflammatory cell migration by regulating PTEN phosphorylation and stability (By similarity). Acts as a negative regulator of VEGF-induced angiogenic endothelial cell activation. Required for centrosome positioning and centrosome-dependent exit from mitosis (By similarity). Plays a role in terminal erythroid differentiation (By similarity). May regulate closure of the eyelids and ventral body wall by inducing the assembly of actomyosin bundles (By similarity). Promotes keratinocyte terminal differentiation (By similarity). Involved in osteoblast compaction through the fibronectin fibrillogenesis cell-mediated matrix assembly process, essential for osteoblast mineralization (By similarity).</text>
</comment>
<comment type="catalytic activity">
    <reaction evidence="3">
        <text>L-seryl-[protein] + ATP = O-phospho-L-seryl-[protein] + ADP + H(+)</text>
        <dbReference type="Rhea" id="RHEA:17989"/>
        <dbReference type="Rhea" id="RHEA-COMP:9863"/>
        <dbReference type="Rhea" id="RHEA-COMP:11604"/>
        <dbReference type="ChEBI" id="CHEBI:15378"/>
        <dbReference type="ChEBI" id="CHEBI:29999"/>
        <dbReference type="ChEBI" id="CHEBI:30616"/>
        <dbReference type="ChEBI" id="CHEBI:83421"/>
        <dbReference type="ChEBI" id="CHEBI:456216"/>
        <dbReference type="EC" id="2.7.11.1"/>
    </reaction>
    <physiologicalReaction direction="left-to-right" evidence="3">
        <dbReference type="Rhea" id="RHEA:17990"/>
    </physiologicalReaction>
</comment>
<comment type="catalytic activity">
    <reaction evidence="3">
        <text>L-threonyl-[protein] + ATP = O-phospho-L-threonyl-[protein] + ADP + H(+)</text>
        <dbReference type="Rhea" id="RHEA:46608"/>
        <dbReference type="Rhea" id="RHEA-COMP:11060"/>
        <dbReference type="Rhea" id="RHEA-COMP:11605"/>
        <dbReference type="ChEBI" id="CHEBI:15378"/>
        <dbReference type="ChEBI" id="CHEBI:30013"/>
        <dbReference type="ChEBI" id="CHEBI:30616"/>
        <dbReference type="ChEBI" id="CHEBI:61977"/>
        <dbReference type="ChEBI" id="CHEBI:456216"/>
        <dbReference type="EC" id="2.7.11.1"/>
    </reaction>
    <physiologicalReaction direction="left-to-right" evidence="3">
        <dbReference type="Rhea" id="RHEA:46609"/>
    </physiologicalReaction>
</comment>
<comment type="cofactor">
    <cofactor evidence="1">
        <name>Mg(2+)</name>
        <dbReference type="ChEBI" id="CHEBI:18420"/>
    </cofactor>
</comment>
<comment type="activity regulation">
    <text evidence="1">Activated by RHOA binding. Inhibited by Y-27632 (By similarity).</text>
</comment>
<comment type="subunit">
    <text evidence="1 3">Homodimer (By similarity). Interacts with RHOA (activated by GTP), RHOB, RHOC, GEM, MYLC2B, RHOE, PPP1R12A, LIMK1, LIMK2, TSG101, CHORDC1, DAPK3, PFN1, PTEN and JIP3. Interacts with ITGB1BP1 (via N-terminus and PTB domain) (By similarity). Interacts with FHOD1 in a Src-dependent manner (By similarity). Interacts with SHROOM3 (By similarity).</text>
</comment>
<comment type="subcellular location">
    <subcellularLocation>
        <location>Cytoplasm</location>
    </subcellularLocation>
    <subcellularLocation>
        <location>Cytoplasm</location>
        <location>Cytoskeleton</location>
        <location>Microtubule organizing center</location>
        <location>Centrosome</location>
        <location>Centriole</location>
    </subcellularLocation>
    <subcellularLocation>
        <location evidence="1">Golgi apparatus membrane</location>
        <topology evidence="1">Peripheral membrane protein</topology>
    </subcellularLocation>
    <subcellularLocation>
        <location evidence="1">Cell projection</location>
        <location evidence="1">Bleb</location>
    </subcellularLocation>
    <subcellularLocation>
        <location evidence="1">Cytoplasm</location>
        <location evidence="1">Cytoskeleton</location>
    </subcellularLocation>
    <subcellularLocation>
        <location evidence="1">Cell membrane</location>
    </subcellularLocation>
    <subcellularLocation>
        <location evidence="1">Cell projection</location>
        <location evidence="1">Lamellipodium</location>
    </subcellularLocation>
    <subcellularLocation>
        <location evidence="1">Cell projection</location>
        <location evidence="1">Ruffle</location>
    </subcellularLocation>
    <text evidence="1">Associated with the mother centriole and an intercentriolar linker. A small proportion is associated with Golgi membranes. Colocalizes with ITGB1BP1 and ITGB1 at the cell membrane predominantly in lamellipodia and membrane ruffles, but also in retraction fibers. Localizes at the cell membrane in an ITGB1BP1-dependent manner (By similarity).</text>
</comment>
<comment type="domain">
    <text>The C-terminal auto-inhibitory domain interferes with kinase activity. RHOA binding leads to a conformation change and activation of the kinase. Truncated ROCK1 is constitutively activated.</text>
</comment>
<comment type="PTM">
    <text>Autophosphorylated on serine and threonine residues.</text>
</comment>
<comment type="PTM">
    <text evidence="1">Cleaved by caspase-3 during apoptosis. This leads to constitutive activation of the kinase and membrane blebbing (By similarity).</text>
</comment>
<comment type="similarity">
    <text evidence="12">Belongs to the protein kinase superfamily. AGC Ser/Thr protein kinase family.</text>
</comment>
<keyword id="KW-0007">Acetylation</keyword>
<keyword id="KW-0053">Apoptosis</keyword>
<keyword id="KW-0067">ATP-binding</keyword>
<keyword id="KW-1003">Cell membrane</keyword>
<keyword id="KW-0966">Cell projection</keyword>
<keyword id="KW-0175">Coiled coil</keyword>
<keyword id="KW-0963">Cytoplasm</keyword>
<keyword id="KW-0206">Cytoskeleton</keyword>
<keyword id="KW-0333">Golgi apparatus</keyword>
<keyword id="KW-0418">Kinase</keyword>
<keyword id="KW-0460">Magnesium</keyword>
<keyword id="KW-0472">Membrane</keyword>
<keyword id="KW-0479">Metal-binding</keyword>
<keyword id="KW-0547">Nucleotide-binding</keyword>
<keyword id="KW-0597">Phosphoprotein</keyword>
<keyword id="KW-1185">Reference proteome</keyword>
<keyword id="KW-0723">Serine/threonine-protein kinase</keyword>
<keyword id="KW-0808">Transferase</keyword>
<keyword id="KW-0862">Zinc</keyword>
<keyword id="KW-0863">Zinc-finger</keyword>
<name>ROCK1_PANTR</name>
<organism>
    <name type="scientific">Pan troglodytes</name>
    <name type="common">Chimpanzee</name>
    <dbReference type="NCBI Taxonomy" id="9598"/>
    <lineage>
        <taxon>Eukaryota</taxon>
        <taxon>Metazoa</taxon>
        <taxon>Chordata</taxon>
        <taxon>Craniata</taxon>
        <taxon>Vertebrata</taxon>
        <taxon>Euteleostomi</taxon>
        <taxon>Mammalia</taxon>
        <taxon>Eutheria</taxon>
        <taxon>Euarchontoglires</taxon>
        <taxon>Primates</taxon>
        <taxon>Haplorrhini</taxon>
        <taxon>Catarrhini</taxon>
        <taxon>Hominidae</taxon>
        <taxon>Pan</taxon>
    </lineage>
</organism>
<accession>P61584</accession>
<proteinExistence type="inferred from homology"/>
<gene>
    <name type="primary">ROCK1</name>
</gene>
<reference key="1">
    <citation type="journal article" date="2004" name="Genomics">
        <title>Inversion, duplication, and changes in gene context are associated with human chromosome 18 evolution.</title>
        <authorList>
            <person name="Dennehey B.K."/>
            <person name="Gutches D.G."/>
            <person name="McConkey E.H."/>
            <person name="Krauter K.S."/>
        </authorList>
    </citation>
    <scope>NUCLEOTIDE SEQUENCE [GENOMIC DNA]</scope>
</reference>
<protein>
    <recommendedName>
        <fullName>Rho-associated protein kinase 1</fullName>
        <ecNumber evidence="3">2.7.11.1</ecNumber>
    </recommendedName>
    <alternativeName>
        <fullName>Rho-associated, coiled-coil-containing protein kinase 1</fullName>
    </alternativeName>
    <alternativeName>
        <fullName>Rho-associated, coiled-coil-containing protein kinase I</fullName>
        <shortName>ROCK-I</shortName>
    </alternativeName>
    <alternativeName>
        <fullName>p160 ROCK-1</fullName>
        <shortName>p160ROCK</shortName>
    </alternativeName>
</protein>
<feature type="chain" id="PRO_0000086621" description="Rho-associated protein kinase 1">
    <location>
        <begin position="1" status="less than"/>
        <end position="1003"/>
    </location>
</feature>
<feature type="domain" description="AGC-kinase C-terminal" evidence="8">
    <location>
        <begin position="1" status="less than"/>
        <end position="58"/>
    </location>
</feature>
<feature type="domain" description="REM-1" evidence="10">
    <location>
        <begin position="128"/>
        <end position="205"/>
    </location>
</feature>
<feature type="domain" description="RhoBD" evidence="9">
    <location>
        <begin position="598"/>
        <end position="664"/>
    </location>
</feature>
<feature type="domain" description="PH" evidence="6">
    <location>
        <begin position="767"/>
        <end position="966"/>
    </location>
</feature>
<feature type="zinc finger region" description="Phorbol-ester/DAG-type" evidence="7">
    <location>
        <begin position="877"/>
        <end position="930"/>
    </location>
</feature>
<feature type="region of interest" description="Disordered" evidence="11">
    <location>
        <begin position="1"/>
        <end position="28"/>
    </location>
</feature>
<feature type="region of interest" description="Interaction with FHOD1" evidence="1">
    <location>
        <begin position="17"/>
        <end position="376"/>
    </location>
</feature>
<feature type="region of interest" description="SHROOM3 binding" evidence="3">
    <location>
        <begin position="356"/>
        <end position="595"/>
    </location>
</feature>
<feature type="region of interest" description="RHOA binding" evidence="1">
    <location>
        <begin position="647"/>
        <end position="659"/>
    </location>
</feature>
<feature type="region of interest" description="Auto-inhibitory" evidence="1">
    <location>
        <begin position="764"/>
        <end position="1003"/>
    </location>
</feature>
<feature type="region of interest" description="Disordered" evidence="11">
    <location>
        <begin position="968"/>
        <end position="1003"/>
    </location>
</feature>
<feature type="coiled-coil region" evidence="5">
    <location>
        <begin position="71"/>
        <end position="341"/>
    </location>
</feature>
<feature type="coiled-coil region" evidence="5">
    <location>
        <begin position="660"/>
        <end position="751"/>
    </location>
</feature>
<feature type="compositionally biased region" description="Acidic residues" evidence="11">
    <location>
        <begin position="16"/>
        <end position="28"/>
    </location>
</feature>
<feature type="compositionally biased region" description="Polar residues" evidence="11">
    <location>
        <begin position="979"/>
        <end position="1003"/>
    </location>
</feature>
<feature type="site" description="Cleavage; by caspase-3" evidence="1">
    <location>
        <begin position="762"/>
        <end position="763"/>
    </location>
</feature>
<feature type="modified residue" description="N6-acetyllysine" evidence="3">
    <location>
        <position position="296"/>
    </location>
</feature>
<feature type="modified residue" description="Phosphoserine" evidence="3">
    <location>
        <position position="754"/>
    </location>
</feature>
<feature type="modified residue" description="Phosphoserine" evidence="2">
    <location>
        <position position="757"/>
    </location>
</feature>
<feature type="modified residue" description="Phosphoserine" evidence="3">
    <location>
        <position position="977"/>
    </location>
</feature>
<feature type="non-terminal residue">
    <location>
        <position position="1"/>
    </location>
</feature>
<evidence type="ECO:0000250" key="1"/>
<evidence type="ECO:0000250" key="2">
    <source>
        <dbReference type="UniProtKB" id="P70335"/>
    </source>
</evidence>
<evidence type="ECO:0000250" key="3">
    <source>
        <dbReference type="UniProtKB" id="Q13464"/>
    </source>
</evidence>
<evidence type="ECO:0000250" key="4">
    <source>
        <dbReference type="UniProtKB" id="Q8MIT6"/>
    </source>
</evidence>
<evidence type="ECO:0000255" key="5"/>
<evidence type="ECO:0000255" key="6">
    <source>
        <dbReference type="PROSITE-ProRule" id="PRU00145"/>
    </source>
</evidence>
<evidence type="ECO:0000255" key="7">
    <source>
        <dbReference type="PROSITE-ProRule" id="PRU00226"/>
    </source>
</evidence>
<evidence type="ECO:0000255" key="8">
    <source>
        <dbReference type="PROSITE-ProRule" id="PRU00618"/>
    </source>
</evidence>
<evidence type="ECO:0000255" key="9">
    <source>
        <dbReference type="PROSITE-ProRule" id="PRU01206"/>
    </source>
</evidence>
<evidence type="ECO:0000255" key="10">
    <source>
        <dbReference type="PROSITE-ProRule" id="PRU01207"/>
    </source>
</evidence>
<evidence type="ECO:0000256" key="11">
    <source>
        <dbReference type="SAM" id="MobiDB-lite"/>
    </source>
</evidence>
<evidence type="ECO:0000305" key="12"/>